<proteinExistence type="inferred from homology"/>
<reference key="1">
    <citation type="submission" date="2008-01" db="EMBL/GenBank/DDBJ databases">
        <title>Complete sequence of Thermoanaerobacter sp. X514.</title>
        <authorList>
            <consortium name="US DOE Joint Genome Institute"/>
            <person name="Copeland A."/>
            <person name="Lucas S."/>
            <person name="Lapidus A."/>
            <person name="Barry K."/>
            <person name="Glavina del Rio T."/>
            <person name="Dalin E."/>
            <person name="Tice H."/>
            <person name="Pitluck S."/>
            <person name="Bruce D."/>
            <person name="Goodwin L."/>
            <person name="Saunders E."/>
            <person name="Brettin T."/>
            <person name="Detter J.C."/>
            <person name="Han C."/>
            <person name="Schmutz J."/>
            <person name="Larimer F."/>
            <person name="Land M."/>
            <person name="Hauser L."/>
            <person name="Kyrpides N."/>
            <person name="Kim E."/>
            <person name="Hemme C."/>
            <person name="Fields M.W."/>
            <person name="He Z."/>
            <person name="Zhou J."/>
            <person name="Richardson P."/>
        </authorList>
    </citation>
    <scope>NUCLEOTIDE SEQUENCE [LARGE SCALE GENOMIC DNA]</scope>
    <source>
        <strain>X514</strain>
    </source>
</reference>
<dbReference type="EC" id="6.3.4.3" evidence="1"/>
<dbReference type="EMBL" id="CP000923">
    <property type="protein sequence ID" value="ABY92098.1"/>
    <property type="molecule type" value="Genomic_DNA"/>
</dbReference>
<dbReference type="RefSeq" id="WP_009052988.1">
    <property type="nucleotide sequence ID" value="NC_010320.1"/>
</dbReference>
<dbReference type="SMR" id="B0K5A5"/>
<dbReference type="KEGG" id="tex:Teth514_0795"/>
<dbReference type="HOGENOM" id="CLU_003601_3_3_9"/>
<dbReference type="UniPathway" id="UPA00193"/>
<dbReference type="Proteomes" id="UP000002155">
    <property type="component" value="Chromosome"/>
</dbReference>
<dbReference type="GO" id="GO:0005524">
    <property type="term" value="F:ATP binding"/>
    <property type="evidence" value="ECO:0007669"/>
    <property type="project" value="UniProtKB-UniRule"/>
</dbReference>
<dbReference type="GO" id="GO:0004329">
    <property type="term" value="F:formate-tetrahydrofolate ligase activity"/>
    <property type="evidence" value="ECO:0007669"/>
    <property type="project" value="UniProtKB-UniRule"/>
</dbReference>
<dbReference type="GO" id="GO:0035999">
    <property type="term" value="P:tetrahydrofolate interconversion"/>
    <property type="evidence" value="ECO:0007669"/>
    <property type="project" value="UniProtKB-UniRule"/>
</dbReference>
<dbReference type="CDD" id="cd00477">
    <property type="entry name" value="FTHFS"/>
    <property type="match status" value="1"/>
</dbReference>
<dbReference type="FunFam" id="3.30.1510.10:FF:000001">
    <property type="entry name" value="Formate--tetrahydrofolate ligase"/>
    <property type="match status" value="1"/>
</dbReference>
<dbReference type="FunFam" id="3.10.410.10:FF:000001">
    <property type="entry name" value="Putative formate--tetrahydrofolate ligase"/>
    <property type="match status" value="1"/>
</dbReference>
<dbReference type="Gene3D" id="3.30.1510.10">
    <property type="entry name" value="Domain 2, N(10)-formyltetrahydrofolate synthetase"/>
    <property type="match status" value="1"/>
</dbReference>
<dbReference type="Gene3D" id="3.10.410.10">
    <property type="entry name" value="Formyltetrahydrofolate synthetase, domain 3"/>
    <property type="match status" value="1"/>
</dbReference>
<dbReference type="Gene3D" id="3.40.50.300">
    <property type="entry name" value="P-loop containing nucleotide triphosphate hydrolases"/>
    <property type="match status" value="1"/>
</dbReference>
<dbReference type="HAMAP" id="MF_01543">
    <property type="entry name" value="FTHFS"/>
    <property type="match status" value="1"/>
</dbReference>
<dbReference type="InterPro" id="IPR000559">
    <property type="entry name" value="Formate_THF_ligase"/>
</dbReference>
<dbReference type="InterPro" id="IPR020628">
    <property type="entry name" value="Formate_THF_ligase_CS"/>
</dbReference>
<dbReference type="InterPro" id="IPR027417">
    <property type="entry name" value="P-loop_NTPase"/>
</dbReference>
<dbReference type="NCBIfam" id="NF010030">
    <property type="entry name" value="PRK13505.1"/>
    <property type="match status" value="1"/>
</dbReference>
<dbReference type="Pfam" id="PF01268">
    <property type="entry name" value="FTHFS"/>
    <property type="match status" value="1"/>
</dbReference>
<dbReference type="SUPFAM" id="SSF52540">
    <property type="entry name" value="P-loop containing nucleoside triphosphate hydrolases"/>
    <property type="match status" value="1"/>
</dbReference>
<dbReference type="PROSITE" id="PS00721">
    <property type="entry name" value="FTHFS_1"/>
    <property type="match status" value="1"/>
</dbReference>
<dbReference type="PROSITE" id="PS00722">
    <property type="entry name" value="FTHFS_2"/>
    <property type="match status" value="1"/>
</dbReference>
<feature type="chain" id="PRO_1000146707" description="Formate--tetrahydrofolate ligase">
    <location>
        <begin position="1"/>
        <end position="555"/>
    </location>
</feature>
<feature type="binding site" evidence="1">
    <location>
        <begin position="65"/>
        <end position="72"/>
    </location>
    <ligand>
        <name>ATP</name>
        <dbReference type="ChEBI" id="CHEBI:30616"/>
    </ligand>
</feature>
<comment type="catalytic activity">
    <reaction evidence="1">
        <text>(6S)-5,6,7,8-tetrahydrofolate + formate + ATP = (6R)-10-formyltetrahydrofolate + ADP + phosphate</text>
        <dbReference type="Rhea" id="RHEA:20221"/>
        <dbReference type="ChEBI" id="CHEBI:15740"/>
        <dbReference type="ChEBI" id="CHEBI:30616"/>
        <dbReference type="ChEBI" id="CHEBI:43474"/>
        <dbReference type="ChEBI" id="CHEBI:57453"/>
        <dbReference type="ChEBI" id="CHEBI:195366"/>
        <dbReference type="ChEBI" id="CHEBI:456216"/>
        <dbReference type="EC" id="6.3.4.3"/>
    </reaction>
</comment>
<comment type="pathway">
    <text evidence="1">One-carbon metabolism; tetrahydrofolate interconversion.</text>
</comment>
<comment type="similarity">
    <text evidence="1">Belongs to the formate--tetrahydrofolate ligase family.</text>
</comment>
<evidence type="ECO:0000255" key="1">
    <source>
        <dbReference type="HAMAP-Rule" id="MF_01543"/>
    </source>
</evidence>
<organism>
    <name type="scientific">Thermoanaerobacter sp. (strain X514)</name>
    <dbReference type="NCBI Taxonomy" id="399726"/>
    <lineage>
        <taxon>Bacteria</taxon>
        <taxon>Bacillati</taxon>
        <taxon>Bacillota</taxon>
        <taxon>Clostridia</taxon>
        <taxon>Thermoanaerobacterales</taxon>
        <taxon>Thermoanaerobacteraceae</taxon>
        <taxon>Thermoanaerobacter</taxon>
    </lineage>
</organism>
<sequence>MKSDIEIAQEAKMLHIREVAKKLDIEEDYLEYYGKYKAKISPALSEKIKDRKDGKLILVTAITPTPAGEGKTTLTVGLGQALAKIGKKAMIALREPSLGPCMGIKGGAAGGGYSQVVPMEDINLHFTGDLHAITAAHNLLAAMIDNHIHHGNELNIDIRAITWKRAMDMNDRALREIIVGLGGKANGFPRQDGFIITVASEVMAILCLAQDLMDLKRRIGDIIVAYDKDGNPVTARDLKADGAMTVLLKDAIKPNLVQTIENVPAFVHGGPFANIAHGCNSLIATKYGLKLADYLVTEAGFGADLGAEKFFDIKSRFGGLTPNAAVIVATVRALKMHGGVKKEDLQKEDVEAVRRGIENLEKQVENVRKFGVPVVVALNRFVFDTEREIEEVRKACEEMGVDMAVAEVWEKGGEGGIELAEKVVKACETPSNFHVLYDETLPIKDKLHIIATEIYGADGVEYTASALKDIANLERLGFDKMPIVVAKTQYSLSDDPKLLGRPRGFKITVRELRVSMGAGFVVVFTGDIMTMPGLPKHPAAENIDIDENGRITGLF</sequence>
<accession>B0K5A5</accession>
<name>FTHS_THEPX</name>
<protein>
    <recommendedName>
        <fullName evidence="1">Formate--tetrahydrofolate ligase</fullName>
        <ecNumber evidence="1">6.3.4.3</ecNumber>
    </recommendedName>
    <alternativeName>
        <fullName evidence="1">Formyltetrahydrofolate synthetase</fullName>
        <shortName evidence="1">FHS</shortName>
        <shortName evidence="1">FTHFS</shortName>
    </alternativeName>
</protein>
<keyword id="KW-0067">ATP-binding</keyword>
<keyword id="KW-0436">Ligase</keyword>
<keyword id="KW-0547">Nucleotide-binding</keyword>
<keyword id="KW-0554">One-carbon metabolism</keyword>
<gene>
    <name evidence="1" type="primary">fhs</name>
    <name type="ordered locus">Teth514_0795</name>
</gene>